<sequence>GDIFYPGYCPDVKPVNDFDLSAFAGAWHEIAKLPLENENQGKCTIAEYKYDGKKASVYNSFVSNGVKEYMEGDLEIAPDAKYTKQGKYVMTFKFGQRVVNLVPWVLATDYKNYAINYNCDYHPDKKAHSIHAWILSKSKVLEGNTKEVVDNVLKTFSHLIDASKFISNDFSEAACQYSTTYSLTGPDRH</sequence>
<accession>P00305</accession>
<proteinExistence type="evidence at protein level"/>
<reference key="1">
    <citation type="journal article" date="1984" name="J. Biol. Chem.">
        <title>The covalent protein structure of insecticyanin, a blue biliprotein from the hemolymph of the tobacco hornworm, Manduca sexta L.</title>
        <authorList>
            <person name="Riley C.T."/>
            <person name="Barbeau B.K."/>
            <person name="Keim P.S."/>
            <person name="Kezdy F.J."/>
            <person name="Heinrikson R.L."/>
            <person name="Law J.H."/>
        </authorList>
    </citation>
    <scope>PROTEIN SEQUENCE</scope>
    <source>
        <tissue>Fifth instar larvae</tissue>
    </source>
</reference>
<reference key="2">
    <citation type="journal article" date="1987" name="EMBO J.">
        <title>The molecular structure of insecticyanin from the tobacco hornworm Manduca sexta L. at 2.6-A resolution.</title>
        <authorList>
            <person name="Holden H.M."/>
            <person name="Rypniewski W.R."/>
            <person name="Law J.H."/>
            <person name="Rayment I."/>
        </authorList>
    </citation>
    <scope>X-RAY CRYSTALLOGRAPHY (2.6 ANGSTROMS)</scope>
</reference>
<reference key="3">
    <citation type="journal article" date="1985" name="Biochemistry">
        <title>Purification and characterization of a biliverdin-associated protein from the hemolymph of Manduca sexta.</title>
        <authorList>
            <person name="Goodman W.G."/>
            <person name="Adams B."/>
            <person name="Trost J.T."/>
        </authorList>
    </citation>
    <scope>IDENTIFICATION OF CHROMOPHORE</scope>
</reference>
<evidence type="ECO:0000269" key="1">
    <source>
    </source>
</evidence>
<evidence type="ECO:0000305" key="2"/>
<evidence type="ECO:0007829" key="3">
    <source>
        <dbReference type="PDB" id="1Z24"/>
    </source>
</evidence>
<organism>
    <name type="scientific">Manduca sexta</name>
    <name type="common">Tobacco hawkmoth</name>
    <name type="synonym">Tobacco hornworm</name>
    <dbReference type="NCBI Taxonomy" id="7130"/>
    <lineage>
        <taxon>Eukaryota</taxon>
        <taxon>Metazoa</taxon>
        <taxon>Ecdysozoa</taxon>
        <taxon>Arthropoda</taxon>
        <taxon>Hexapoda</taxon>
        <taxon>Insecta</taxon>
        <taxon>Pterygota</taxon>
        <taxon>Neoptera</taxon>
        <taxon>Endopterygota</taxon>
        <taxon>Lepidoptera</taxon>
        <taxon>Glossata</taxon>
        <taxon>Ditrysia</taxon>
        <taxon>Bombycoidea</taxon>
        <taxon>Sphingidae</taxon>
        <taxon>Sphinginae</taxon>
        <taxon>Sphingini</taxon>
        <taxon>Manduca</taxon>
    </lineage>
</organism>
<gene>
    <name type="primary">INSA</name>
</gene>
<protein>
    <recommendedName>
        <fullName>Insecticyanin-A</fullName>
        <shortName>INS-a</shortName>
    </recommendedName>
    <alternativeName>
        <fullName>Blue biliprotein</fullName>
    </alternativeName>
</protein>
<dbReference type="PIR" id="A03225">
    <property type="entry name" value="CUWOI"/>
</dbReference>
<dbReference type="PDB" id="1Z24">
    <property type="method" value="X-ray"/>
    <property type="resolution" value="2.60 A"/>
    <property type="chains" value="A=1-189"/>
</dbReference>
<dbReference type="PDBsum" id="1Z24"/>
<dbReference type="SMR" id="P00305"/>
<dbReference type="OrthoDB" id="565904at2759"/>
<dbReference type="EvolutionaryTrace" id="P00305"/>
<dbReference type="GO" id="GO:0005737">
    <property type="term" value="C:cytoplasm"/>
    <property type="evidence" value="ECO:0007669"/>
    <property type="project" value="TreeGrafter"/>
</dbReference>
<dbReference type="GO" id="GO:0005576">
    <property type="term" value="C:extracellular region"/>
    <property type="evidence" value="ECO:0007669"/>
    <property type="project" value="UniProtKB-SubCell"/>
</dbReference>
<dbReference type="GO" id="GO:0031409">
    <property type="term" value="F:pigment binding"/>
    <property type="evidence" value="ECO:0007669"/>
    <property type="project" value="UniProtKB-KW"/>
</dbReference>
<dbReference type="GO" id="GO:0006629">
    <property type="term" value="P:lipid metabolic process"/>
    <property type="evidence" value="ECO:0007669"/>
    <property type="project" value="TreeGrafter"/>
</dbReference>
<dbReference type="GO" id="GO:0000302">
    <property type="term" value="P:response to reactive oxygen species"/>
    <property type="evidence" value="ECO:0007669"/>
    <property type="project" value="TreeGrafter"/>
</dbReference>
<dbReference type="Gene3D" id="2.40.128.20">
    <property type="match status" value="1"/>
</dbReference>
<dbReference type="InterPro" id="IPR012674">
    <property type="entry name" value="Calycin"/>
</dbReference>
<dbReference type="InterPro" id="IPR003057">
    <property type="entry name" value="Invtbrt_color"/>
</dbReference>
<dbReference type="InterPro" id="IPR022271">
    <property type="entry name" value="Lipocalin_ApoD"/>
</dbReference>
<dbReference type="InterPro" id="IPR022272">
    <property type="entry name" value="Lipocalin_CS"/>
</dbReference>
<dbReference type="InterPro" id="IPR000566">
    <property type="entry name" value="Lipocln_cytosolic_FA-bd_dom"/>
</dbReference>
<dbReference type="PANTHER" id="PTHR10612">
    <property type="entry name" value="APOLIPOPROTEIN D"/>
    <property type="match status" value="1"/>
</dbReference>
<dbReference type="PANTHER" id="PTHR10612:SF34">
    <property type="entry name" value="APOLIPOPROTEIN D"/>
    <property type="match status" value="1"/>
</dbReference>
<dbReference type="Pfam" id="PF00061">
    <property type="entry name" value="Lipocalin"/>
    <property type="match status" value="1"/>
</dbReference>
<dbReference type="PIRSF" id="PIRSF036893">
    <property type="entry name" value="Lipocalin_ApoD"/>
    <property type="match status" value="1"/>
</dbReference>
<dbReference type="PRINTS" id="PR01273">
    <property type="entry name" value="INVTBRTCOLOR"/>
</dbReference>
<dbReference type="SUPFAM" id="SSF50814">
    <property type="entry name" value="Lipocalins"/>
    <property type="match status" value="1"/>
</dbReference>
<dbReference type="PROSITE" id="PS00213">
    <property type="entry name" value="LIPOCALIN"/>
    <property type="match status" value="1"/>
</dbReference>
<name>ICYA_MANSE</name>
<feature type="chain" id="PRO_0000201012" description="Insecticyanin-A">
    <location>
        <begin position="1"/>
        <end position="189"/>
    </location>
</feature>
<feature type="disulfide bond" evidence="1">
    <location>
        <begin position="9"/>
        <end position="119"/>
    </location>
</feature>
<feature type="disulfide bond" evidence="1">
    <location>
        <begin position="43"/>
        <end position="175"/>
    </location>
</feature>
<feature type="strand" evidence="3">
    <location>
        <begin position="3"/>
        <end position="8"/>
    </location>
</feature>
<feature type="helix" evidence="3">
    <location>
        <begin position="20"/>
        <end position="23"/>
    </location>
</feature>
<feature type="strand" evidence="3">
    <location>
        <begin position="25"/>
        <end position="32"/>
    </location>
</feature>
<feature type="helix" evidence="3">
    <location>
        <begin position="36"/>
        <end position="38"/>
    </location>
</feature>
<feature type="strand" evidence="3">
    <location>
        <begin position="42"/>
        <end position="50"/>
    </location>
</feature>
<feature type="strand" evidence="3">
    <location>
        <begin position="55"/>
        <end position="63"/>
    </location>
</feature>
<feature type="strand" evidence="3">
    <location>
        <begin position="66"/>
        <end position="76"/>
    </location>
</feature>
<feature type="helix" evidence="3">
    <location>
        <begin position="80"/>
        <end position="83"/>
    </location>
</feature>
<feature type="strand" evidence="3">
    <location>
        <begin position="86"/>
        <end position="94"/>
    </location>
</feature>
<feature type="strand" evidence="3">
    <location>
        <begin position="97"/>
        <end position="101"/>
    </location>
</feature>
<feature type="strand" evidence="3">
    <location>
        <begin position="104"/>
        <end position="108"/>
    </location>
</feature>
<feature type="strand" evidence="3">
    <location>
        <begin position="110"/>
        <end position="121"/>
    </location>
</feature>
<feature type="turn" evidence="3">
    <location>
        <begin position="123"/>
        <end position="125"/>
    </location>
</feature>
<feature type="strand" evidence="3">
    <location>
        <begin position="126"/>
        <end position="140"/>
    </location>
</feature>
<feature type="helix" evidence="3">
    <location>
        <begin position="144"/>
        <end position="154"/>
    </location>
</feature>
<feature type="turn" evidence="3">
    <location>
        <begin position="155"/>
        <end position="159"/>
    </location>
</feature>
<feature type="helix" evidence="3">
    <location>
        <begin position="162"/>
        <end position="164"/>
    </location>
</feature>
<feature type="helix" evidence="3">
    <location>
        <begin position="172"/>
        <end position="175"/>
    </location>
</feature>
<feature type="strand" evidence="3">
    <location>
        <begin position="178"/>
        <end position="187"/>
    </location>
</feature>
<keyword id="KW-0002">3D-structure</keyword>
<keyword id="KW-0089">Bile pigment</keyword>
<keyword id="KW-0157">Chromophore</keyword>
<keyword id="KW-0903">Direct protein sequencing</keyword>
<keyword id="KW-1015">Disulfide bond</keyword>
<keyword id="KW-0608">Pigment</keyword>
<keyword id="KW-0964">Secreted</keyword>
<comment type="function">
    <text>This protein binds a chromophore: biliverdin IX, isomer gamma. Mixed with lipoprotein-bound carotenes, this blue protein provides hornworms with their green cryptic coloration which serves a camouflage.</text>
</comment>
<comment type="subunit">
    <text>Homotetramer.</text>
</comment>
<comment type="subcellular location">
    <subcellularLocation>
        <location>Secreted</location>
    </subcellularLocation>
</comment>
<comment type="tissue specificity">
    <text>Synthesized only in the caterpillars, apparently by the epidermis and secreted into the hemolymph. The protein is passed over from the larval hemolymph to that of pupae and adults and is sequestered in the eggs.</text>
</comment>
<comment type="domain">
    <text>The molecule consist primarily of eight antiparallel beta-pleated strands, which enclose a hydrophobic pocket, and an alpha-helix.</text>
</comment>
<comment type="similarity">
    <text evidence="2">Belongs to the calycin superfamily. Lipocalin family.</text>
</comment>